<organism>
    <name type="scientific">Geobacter sp. (strain M21)</name>
    <dbReference type="NCBI Taxonomy" id="443144"/>
    <lineage>
        <taxon>Bacteria</taxon>
        <taxon>Pseudomonadati</taxon>
        <taxon>Thermodesulfobacteriota</taxon>
        <taxon>Desulfuromonadia</taxon>
        <taxon>Geobacterales</taxon>
        <taxon>Geobacteraceae</taxon>
        <taxon>Geobacter</taxon>
    </lineage>
</organism>
<feature type="chain" id="PRO_1000212611" description="Probable transcriptional regulatory protein GM21_0933">
    <location>
        <begin position="1"/>
        <end position="247"/>
    </location>
</feature>
<reference key="1">
    <citation type="submission" date="2009-07" db="EMBL/GenBank/DDBJ databases">
        <title>Complete sequence of Geobacter sp. M21.</title>
        <authorList>
            <consortium name="US DOE Joint Genome Institute"/>
            <person name="Lucas S."/>
            <person name="Copeland A."/>
            <person name="Lapidus A."/>
            <person name="Glavina del Rio T."/>
            <person name="Dalin E."/>
            <person name="Tice H."/>
            <person name="Bruce D."/>
            <person name="Goodwin L."/>
            <person name="Pitluck S."/>
            <person name="Saunders E."/>
            <person name="Brettin T."/>
            <person name="Detter J.C."/>
            <person name="Han C."/>
            <person name="Larimer F."/>
            <person name="Land M."/>
            <person name="Hauser L."/>
            <person name="Kyrpides N."/>
            <person name="Ovchinnikova G."/>
            <person name="Lovley D."/>
        </authorList>
    </citation>
    <scope>NUCLEOTIDE SEQUENCE [LARGE SCALE GENOMIC DNA]</scope>
    <source>
        <strain>M21</strain>
    </source>
</reference>
<evidence type="ECO:0000255" key="1">
    <source>
        <dbReference type="HAMAP-Rule" id="MF_00693"/>
    </source>
</evidence>
<comment type="subcellular location">
    <subcellularLocation>
        <location evidence="1">Cytoplasm</location>
    </subcellularLocation>
</comment>
<comment type="similarity">
    <text evidence="1">Belongs to the TACO1 family.</text>
</comment>
<dbReference type="EMBL" id="CP001661">
    <property type="protein sequence ID" value="ACT17000.1"/>
    <property type="molecule type" value="Genomic_DNA"/>
</dbReference>
<dbReference type="SMR" id="C6E1T1"/>
<dbReference type="STRING" id="443144.GM21_0933"/>
<dbReference type="KEGG" id="gem:GM21_0933"/>
<dbReference type="eggNOG" id="COG0217">
    <property type="taxonomic scope" value="Bacteria"/>
</dbReference>
<dbReference type="HOGENOM" id="CLU_062974_2_2_7"/>
<dbReference type="OrthoDB" id="9781053at2"/>
<dbReference type="GO" id="GO:0005829">
    <property type="term" value="C:cytosol"/>
    <property type="evidence" value="ECO:0007669"/>
    <property type="project" value="TreeGrafter"/>
</dbReference>
<dbReference type="GO" id="GO:0003677">
    <property type="term" value="F:DNA binding"/>
    <property type="evidence" value="ECO:0007669"/>
    <property type="project" value="UniProtKB-UniRule"/>
</dbReference>
<dbReference type="GO" id="GO:0006355">
    <property type="term" value="P:regulation of DNA-templated transcription"/>
    <property type="evidence" value="ECO:0007669"/>
    <property type="project" value="UniProtKB-UniRule"/>
</dbReference>
<dbReference type="FunFam" id="1.10.10.200:FF:000001">
    <property type="entry name" value="Probable transcriptional regulatory protein YebC"/>
    <property type="match status" value="1"/>
</dbReference>
<dbReference type="FunFam" id="3.30.70.980:FF:000002">
    <property type="entry name" value="Probable transcriptional regulatory protein YebC"/>
    <property type="match status" value="1"/>
</dbReference>
<dbReference type="Gene3D" id="1.10.10.200">
    <property type="match status" value="1"/>
</dbReference>
<dbReference type="Gene3D" id="3.30.70.980">
    <property type="match status" value="2"/>
</dbReference>
<dbReference type="HAMAP" id="MF_00693">
    <property type="entry name" value="Transcrip_reg_TACO1"/>
    <property type="match status" value="1"/>
</dbReference>
<dbReference type="InterPro" id="IPR017856">
    <property type="entry name" value="Integrase-like_N"/>
</dbReference>
<dbReference type="InterPro" id="IPR048300">
    <property type="entry name" value="TACO1_YebC-like_2nd/3rd_dom"/>
</dbReference>
<dbReference type="InterPro" id="IPR049083">
    <property type="entry name" value="TACO1_YebC_N"/>
</dbReference>
<dbReference type="InterPro" id="IPR002876">
    <property type="entry name" value="Transcrip_reg_TACO1-like"/>
</dbReference>
<dbReference type="InterPro" id="IPR026564">
    <property type="entry name" value="Transcrip_reg_TACO1-like_dom3"/>
</dbReference>
<dbReference type="InterPro" id="IPR029072">
    <property type="entry name" value="YebC-like"/>
</dbReference>
<dbReference type="NCBIfam" id="NF001030">
    <property type="entry name" value="PRK00110.1"/>
    <property type="match status" value="1"/>
</dbReference>
<dbReference type="NCBIfam" id="NF009044">
    <property type="entry name" value="PRK12378.1"/>
    <property type="match status" value="1"/>
</dbReference>
<dbReference type="NCBIfam" id="TIGR01033">
    <property type="entry name" value="YebC/PmpR family DNA-binding transcriptional regulator"/>
    <property type="match status" value="1"/>
</dbReference>
<dbReference type="PANTHER" id="PTHR12532:SF6">
    <property type="entry name" value="TRANSCRIPTIONAL REGULATORY PROTEIN YEBC-RELATED"/>
    <property type="match status" value="1"/>
</dbReference>
<dbReference type="PANTHER" id="PTHR12532">
    <property type="entry name" value="TRANSLATIONAL ACTIVATOR OF CYTOCHROME C OXIDASE 1"/>
    <property type="match status" value="1"/>
</dbReference>
<dbReference type="Pfam" id="PF20772">
    <property type="entry name" value="TACO1_YebC_N"/>
    <property type="match status" value="1"/>
</dbReference>
<dbReference type="Pfam" id="PF01709">
    <property type="entry name" value="Transcrip_reg"/>
    <property type="match status" value="1"/>
</dbReference>
<dbReference type="SUPFAM" id="SSF75625">
    <property type="entry name" value="YebC-like"/>
    <property type="match status" value="1"/>
</dbReference>
<accession>C6E1T1</accession>
<keyword id="KW-0963">Cytoplasm</keyword>
<keyword id="KW-0238">DNA-binding</keyword>
<keyword id="KW-0804">Transcription</keyword>
<keyword id="KW-0805">Transcription regulation</keyword>
<proteinExistence type="inferred from homology"/>
<protein>
    <recommendedName>
        <fullName evidence="1">Probable transcriptional regulatory protein GM21_0933</fullName>
    </recommendedName>
</protein>
<sequence>MSGHNKWSTIKHKKGAADAKRGKIFTKIIKEITVAAKLGGGDPDGNPRLRTAIDKAKGENMPKDNVERAIKKGVGGLEGTTYEETTYEGYGPGGTAVLVEVMTDNRNRTVSDVRSIFTKCNGNMGESGCVSWLFDKKGLLVFPKSIDFDKLFEASIEAGADDVTDEDEQYEVLTDPSAFHQVKTALEGAGFKAESAEITMIPQTMVKLEGKNAENMLKLMDRMEDNDDVQNVYANFDISEEEMEKMM</sequence>
<gene>
    <name type="ordered locus">GM21_0933</name>
</gene>
<name>Y933_GEOSM</name>